<keyword id="KW-0479">Metal-binding</keyword>
<keyword id="KW-1185">Reference proteome</keyword>
<keyword id="KW-0862">Zinc</keyword>
<keyword id="KW-0863">Zinc-finger</keyword>
<organism>
    <name type="scientific">Dictyostelium discoideum</name>
    <name type="common">Social amoeba</name>
    <dbReference type="NCBI Taxonomy" id="44689"/>
    <lineage>
        <taxon>Eukaryota</taxon>
        <taxon>Amoebozoa</taxon>
        <taxon>Evosea</taxon>
        <taxon>Eumycetozoa</taxon>
        <taxon>Dictyostelia</taxon>
        <taxon>Dictyosteliales</taxon>
        <taxon>Dictyosteliaceae</taxon>
        <taxon>Dictyostelium</taxon>
    </lineage>
</organism>
<dbReference type="EMBL" id="AAFI02000042">
    <property type="protein sequence ID" value="EAL66592.1"/>
    <property type="molecule type" value="Genomic_DNA"/>
</dbReference>
<dbReference type="RefSeq" id="XP_640565.1">
    <property type="nucleotide sequence ID" value="XM_635473.1"/>
</dbReference>
<dbReference type="SMR" id="Q54TM6"/>
<dbReference type="FunCoup" id="Q54TM6">
    <property type="interactions" value="744"/>
</dbReference>
<dbReference type="STRING" id="44689.Q54TM6"/>
<dbReference type="PaxDb" id="44689-DDB0216329"/>
<dbReference type="EnsemblProtists" id="EAL66592">
    <property type="protein sequence ID" value="EAL66592"/>
    <property type="gene ID" value="DDB_G0281661"/>
</dbReference>
<dbReference type="GeneID" id="8623175"/>
<dbReference type="KEGG" id="ddi:DDB_G0281661"/>
<dbReference type="dictyBase" id="DDB_G0281661">
    <property type="gene designation" value="gtaI"/>
</dbReference>
<dbReference type="VEuPathDB" id="AmoebaDB:DDB_G0281661"/>
<dbReference type="eggNOG" id="KOG1601">
    <property type="taxonomic scope" value="Eukaryota"/>
</dbReference>
<dbReference type="HOGENOM" id="CLU_508485_0_0_1"/>
<dbReference type="InParanoid" id="Q54TM6"/>
<dbReference type="OMA" id="RQYHACK"/>
<dbReference type="PRO" id="PR:Q54TM6"/>
<dbReference type="Proteomes" id="UP000002195">
    <property type="component" value="Chromosome 3"/>
</dbReference>
<dbReference type="GO" id="GO:0005634">
    <property type="term" value="C:nucleus"/>
    <property type="evidence" value="ECO:0000318"/>
    <property type="project" value="GO_Central"/>
</dbReference>
<dbReference type="GO" id="GO:0000976">
    <property type="term" value="F:transcription cis-regulatory region binding"/>
    <property type="evidence" value="ECO:0000318"/>
    <property type="project" value="GO_Central"/>
</dbReference>
<dbReference type="GO" id="GO:0008270">
    <property type="term" value="F:zinc ion binding"/>
    <property type="evidence" value="ECO:0007669"/>
    <property type="project" value="UniProtKB-KW"/>
</dbReference>
<dbReference type="GO" id="GO:0006357">
    <property type="term" value="P:regulation of transcription by RNA polymerase II"/>
    <property type="evidence" value="ECO:0000318"/>
    <property type="project" value="GO_Central"/>
</dbReference>
<dbReference type="CDD" id="cd00202">
    <property type="entry name" value="ZnF_GATA"/>
    <property type="match status" value="1"/>
</dbReference>
<dbReference type="Gene3D" id="3.30.50.10">
    <property type="entry name" value="Erythroid Transcription Factor GATA-1, subunit A"/>
    <property type="match status" value="1"/>
</dbReference>
<dbReference type="InterPro" id="IPR051140">
    <property type="entry name" value="GATA_TF"/>
</dbReference>
<dbReference type="InterPro" id="IPR000679">
    <property type="entry name" value="Znf_GATA"/>
</dbReference>
<dbReference type="InterPro" id="IPR013088">
    <property type="entry name" value="Znf_NHR/GATA"/>
</dbReference>
<dbReference type="PANTHER" id="PTHR45658">
    <property type="entry name" value="GATA TRANSCRIPTION FACTOR"/>
    <property type="match status" value="1"/>
</dbReference>
<dbReference type="PANTHER" id="PTHR45658:SF75">
    <property type="entry name" value="GATA ZINC FINGER DOMAIN-CONTAINING PROTEIN 9"/>
    <property type="match status" value="1"/>
</dbReference>
<dbReference type="Pfam" id="PF00320">
    <property type="entry name" value="GATA"/>
    <property type="match status" value="1"/>
</dbReference>
<dbReference type="SMART" id="SM00401">
    <property type="entry name" value="ZnF_GATA"/>
    <property type="match status" value="1"/>
</dbReference>
<dbReference type="SUPFAM" id="SSF57716">
    <property type="entry name" value="Glucocorticoid receptor-like (DNA-binding domain)"/>
    <property type="match status" value="1"/>
</dbReference>
<dbReference type="PROSITE" id="PS00344">
    <property type="entry name" value="GATA_ZN_FINGER_1"/>
    <property type="match status" value="1"/>
</dbReference>
<dbReference type="PROSITE" id="PS50114">
    <property type="entry name" value="GATA_ZN_FINGER_2"/>
    <property type="match status" value="1"/>
</dbReference>
<protein>
    <recommendedName>
        <fullName>GATA zinc finger domain-containing protein 9</fullName>
    </recommendedName>
</protein>
<reference key="1">
    <citation type="journal article" date="2005" name="Nature">
        <title>The genome of the social amoeba Dictyostelium discoideum.</title>
        <authorList>
            <person name="Eichinger L."/>
            <person name="Pachebat J.A."/>
            <person name="Gloeckner G."/>
            <person name="Rajandream M.A."/>
            <person name="Sucgang R."/>
            <person name="Berriman M."/>
            <person name="Song J."/>
            <person name="Olsen R."/>
            <person name="Szafranski K."/>
            <person name="Xu Q."/>
            <person name="Tunggal B."/>
            <person name="Kummerfeld S."/>
            <person name="Madera M."/>
            <person name="Konfortov B.A."/>
            <person name="Rivero F."/>
            <person name="Bankier A.T."/>
            <person name="Lehmann R."/>
            <person name="Hamlin N."/>
            <person name="Davies R."/>
            <person name="Gaudet P."/>
            <person name="Fey P."/>
            <person name="Pilcher K."/>
            <person name="Chen G."/>
            <person name="Saunders D."/>
            <person name="Sodergren E.J."/>
            <person name="Davis P."/>
            <person name="Kerhornou A."/>
            <person name="Nie X."/>
            <person name="Hall N."/>
            <person name="Anjard C."/>
            <person name="Hemphill L."/>
            <person name="Bason N."/>
            <person name="Farbrother P."/>
            <person name="Desany B."/>
            <person name="Just E."/>
            <person name="Morio T."/>
            <person name="Rost R."/>
            <person name="Churcher C.M."/>
            <person name="Cooper J."/>
            <person name="Haydock S."/>
            <person name="van Driessche N."/>
            <person name="Cronin A."/>
            <person name="Goodhead I."/>
            <person name="Muzny D.M."/>
            <person name="Mourier T."/>
            <person name="Pain A."/>
            <person name="Lu M."/>
            <person name="Harper D."/>
            <person name="Lindsay R."/>
            <person name="Hauser H."/>
            <person name="James K.D."/>
            <person name="Quiles M."/>
            <person name="Madan Babu M."/>
            <person name="Saito T."/>
            <person name="Buchrieser C."/>
            <person name="Wardroper A."/>
            <person name="Felder M."/>
            <person name="Thangavelu M."/>
            <person name="Johnson D."/>
            <person name="Knights A."/>
            <person name="Loulseged H."/>
            <person name="Mungall K.L."/>
            <person name="Oliver K."/>
            <person name="Price C."/>
            <person name="Quail M.A."/>
            <person name="Urushihara H."/>
            <person name="Hernandez J."/>
            <person name="Rabbinowitsch E."/>
            <person name="Steffen D."/>
            <person name="Sanders M."/>
            <person name="Ma J."/>
            <person name="Kohara Y."/>
            <person name="Sharp S."/>
            <person name="Simmonds M.N."/>
            <person name="Spiegler S."/>
            <person name="Tivey A."/>
            <person name="Sugano S."/>
            <person name="White B."/>
            <person name="Walker D."/>
            <person name="Woodward J.R."/>
            <person name="Winckler T."/>
            <person name="Tanaka Y."/>
            <person name="Shaulsky G."/>
            <person name="Schleicher M."/>
            <person name="Weinstock G.M."/>
            <person name="Rosenthal A."/>
            <person name="Cox E.C."/>
            <person name="Chisholm R.L."/>
            <person name="Gibbs R.A."/>
            <person name="Loomis W.F."/>
            <person name="Platzer M."/>
            <person name="Kay R.R."/>
            <person name="Williams J.G."/>
            <person name="Dear P.H."/>
            <person name="Noegel A.A."/>
            <person name="Barrell B.G."/>
            <person name="Kuspa A."/>
        </authorList>
    </citation>
    <scope>NUCLEOTIDE SEQUENCE [LARGE SCALE GENOMIC DNA]</scope>
    <source>
        <strain>AX4</strain>
    </source>
</reference>
<gene>
    <name type="primary">gtaI</name>
    <name type="ORF">DDB_G0281661</name>
</gene>
<feature type="chain" id="PRO_0000330442" description="GATA zinc finger domain-containing protein 9">
    <location>
        <begin position="1"/>
        <end position="536"/>
    </location>
</feature>
<feature type="zinc finger region" description="GATA-type" evidence="1">
    <location>
        <begin position="479"/>
        <end position="504"/>
    </location>
</feature>
<feature type="region of interest" description="Disordered" evidence="2">
    <location>
        <begin position="1"/>
        <end position="77"/>
    </location>
</feature>
<feature type="region of interest" description="Disordered" evidence="2">
    <location>
        <begin position="183"/>
        <end position="211"/>
    </location>
</feature>
<feature type="region of interest" description="Disordered" evidence="2">
    <location>
        <begin position="237"/>
        <end position="258"/>
    </location>
</feature>
<feature type="region of interest" description="Disordered" evidence="2">
    <location>
        <begin position="273"/>
        <end position="342"/>
    </location>
</feature>
<feature type="region of interest" description="Disordered" evidence="2">
    <location>
        <begin position="370"/>
        <end position="423"/>
    </location>
</feature>
<feature type="compositionally biased region" description="Polar residues" evidence="2">
    <location>
        <begin position="1"/>
        <end position="20"/>
    </location>
</feature>
<feature type="compositionally biased region" description="Polar residues" evidence="2">
    <location>
        <begin position="36"/>
        <end position="55"/>
    </location>
</feature>
<feature type="compositionally biased region" description="Low complexity" evidence="2">
    <location>
        <begin position="56"/>
        <end position="72"/>
    </location>
</feature>
<feature type="compositionally biased region" description="Acidic residues" evidence="2">
    <location>
        <begin position="188"/>
        <end position="206"/>
    </location>
</feature>
<feature type="compositionally biased region" description="Basic residues" evidence="2">
    <location>
        <begin position="237"/>
        <end position="247"/>
    </location>
</feature>
<feature type="compositionally biased region" description="Polar residues" evidence="2">
    <location>
        <begin position="273"/>
        <end position="283"/>
    </location>
</feature>
<feature type="compositionally biased region" description="Low complexity" evidence="2">
    <location>
        <begin position="318"/>
        <end position="335"/>
    </location>
</feature>
<feature type="compositionally biased region" description="Low complexity" evidence="2">
    <location>
        <begin position="379"/>
        <end position="399"/>
    </location>
</feature>
<name>GTAI_DICDI</name>
<accession>Q54TM6</accession>
<proteinExistence type="predicted"/>
<sequence>MTSFLLFNPGSLQQQQQPHSFSKDFINNNNNNNNNCQSSFSTPLGGSNGINNPNATTNNTTTTTTTTTTTTNPLSGSTGINNSNIEVIDIDQCLKHCGCRNPKELIQLIRSDAIENVEISWPDDMGLWYMNTIKSHEVSLQNLVEGVRVAGQLLLLDPTSARFDLSKKQKTIVVRSVNIDRSSSSLSSEDDDCCYETEEDDNGEDGEVVRSPQSKFSLLLDESEKFRKSFSLKKSSRSAFKKNKKDYHHGSSAGGGGSSGGVVVLHYDNNGNQLHYSNSMTDNNSRHHQHGGVGDGYPHSPPAAGGKSLGKRGYQQWSNSNNNNNNNNNNNNNNNGASGFVQSDEDLDASWLEEIKRNRAEVVPDLSSPALFSMDKRSPSPTLGSSCGSSSPGLNNSGNEMNNSQDSPLGVSGGNGNSLNISSGIQCPPGANIDSAEKAILEGQIHLPPLLRPRQYHACKTSKENRPTKRRKNHTSLFCRHCGTTDTPEWRRGPDGRKSLCNACGLHYSKLVKRENMAVPELSRTFELSEILNPSD</sequence>
<evidence type="ECO:0000255" key="1">
    <source>
        <dbReference type="PROSITE-ProRule" id="PRU00094"/>
    </source>
</evidence>
<evidence type="ECO:0000256" key="2">
    <source>
        <dbReference type="SAM" id="MobiDB-lite"/>
    </source>
</evidence>